<proteinExistence type="inferred from homology"/>
<comment type="function">
    <text evidence="1">Formation of pseudouridine at positions 38, 39 and 40 in the anticodon stem and loop of transfer RNAs.</text>
</comment>
<comment type="catalytic activity">
    <reaction evidence="1">
        <text>uridine(38/39/40) in tRNA = pseudouridine(38/39/40) in tRNA</text>
        <dbReference type="Rhea" id="RHEA:22376"/>
        <dbReference type="Rhea" id="RHEA-COMP:10085"/>
        <dbReference type="Rhea" id="RHEA-COMP:10087"/>
        <dbReference type="ChEBI" id="CHEBI:65314"/>
        <dbReference type="ChEBI" id="CHEBI:65315"/>
        <dbReference type="EC" id="5.4.99.12"/>
    </reaction>
</comment>
<comment type="subunit">
    <text evidence="1">Homodimer.</text>
</comment>
<comment type="similarity">
    <text evidence="1">Belongs to the tRNA pseudouridine synthase TruA family.</text>
</comment>
<evidence type="ECO:0000255" key="1">
    <source>
        <dbReference type="HAMAP-Rule" id="MF_00171"/>
    </source>
</evidence>
<organism>
    <name type="scientific">Escherichia coli O17:K52:H18 (strain UMN026 / ExPEC)</name>
    <dbReference type="NCBI Taxonomy" id="585056"/>
    <lineage>
        <taxon>Bacteria</taxon>
        <taxon>Pseudomonadati</taxon>
        <taxon>Pseudomonadota</taxon>
        <taxon>Gammaproteobacteria</taxon>
        <taxon>Enterobacterales</taxon>
        <taxon>Enterobacteriaceae</taxon>
        <taxon>Escherichia</taxon>
    </lineage>
</organism>
<reference key="1">
    <citation type="journal article" date="2009" name="PLoS Genet.">
        <title>Organised genome dynamics in the Escherichia coli species results in highly diverse adaptive paths.</title>
        <authorList>
            <person name="Touchon M."/>
            <person name="Hoede C."/>
            <person name="Tenaillon O."/>
            <person name="Barbe V."/>
            <person name="Baeriswyl S."/>
            <person name="Bidet P."/>
            <person name="Bingen E."/>
            <person name="Bonacorsi S."/>
            <person name="Bouchier C."/>
            <person name="Bouvet O."/>
            <person name="Calteau A."/>
            <person name="Chiapello H."/>
            <person name="Clermont O."/>
            <person name="Cruveiller S."/>
            <person name="Danchin A."/>
            <person name="Diard M."/>
            <person name="Dossat C."/>
            <person name="Karoui M.E."/>
            <person name="Frapy E."/>
            <person name="Garry L."/>
            <person name="Ghigo J.M."/>
            <person name="Gilles A.M."/>
            <person name="Johnson J."/>
            <person name="Le Bouguenec C."/>
            <person name="Lescat M."/>
            <person name="Mangenot S."/>
            <person name="Martinez-Jehanne V."/>
            <person name="Matic I."/>
            <person name="Nassif X."/>
            <person name="Oztas S."/>
            <person name="Petit M.A."/>
            <person name="Pichon C."/>
            <person name="Rouy Z."/>
            <person name="Ruf C.S."/>
            <person name="Schneider D."/>
            <person name="Tourret J."/>
            <person name="Vacherie B."/>
            <person name="Vallenet D."/>
            <person name="Medigue C."/>
            <person name="Rocha E.P.C."/>
            <person name="Denamur E."/>
        </authorList>
    </citation>
    <scope>NUCLEOTIDE SEQUENCE [LARGE SCALE GENOMIC DNA]</scope>
    <source>
        <strain>UMN026 / ExPEC</strain>
    </source>
</reference>
<protein>
    <recommendedName>
        <fullName evidence="1">tRNA pseudouridine synthase A</fullName>
        <ecNumber evidence="1">5.4.99.12</ecNumber>
    </recommendedName>
    <alternativeName>
        <fullName evidence="1">tRNA pseudouridine(38-40) synthase</fullName>
    </alternativeName>
    <alternativeName>
        <fullName evidence="1">tRNA pseudouridylate synthase I</fullName>
    </alternativeName>
    <alternativeName>
        <fullName evidence="1">tRNA-uridine isomerase I</fullName>
    </alternativeName>
</protein>
<keyword id="KW-0413">Isomerase</keyword>
<keyword id="KW-0819">tRNA processing</keyword>
<sequence>MSDQQQPPVYKIALGIEYDGSKYYGWQRQNEVRSVQEKLEKALSQVANEPITVFCAGRTDAGVHGTGQVVHFETTAQRKDAAWTLGVNANLPGDIAVRWVKAVPDDFHARFSATARRYRYIIYNHRLRPAVLSKGVTHFYEPLDAERMHRAAQCLLGENDFTSFRAVQCQSRTPWRNVMHINVTRHGPYVVVDIKANAFVHHMVRNIVGSLMEVGAHNQPESWIAELLAAKDRTLAAATAKAEGLYLVAVDYPDRYDLPKPPMGPLFLAD</sequence>
<dbReference type="EC" id="5.4.99.12" evidence="1"/>
<dbReference type="EMBL" id="CU928163">
    <property type="protein sequence ID" value="CAR13839.1"/>
    <property type="molecule type" value="Genomic_DNA"/>
</dbReference>
<dbReference type="RefSeq" id="WP_001283590.1">
    <property type="nucleotide sequence ID" value="NC_011751.1"/>
</dbReference>
<dbReference type="RefSeq" id="YP_002413367.1">
    <property type="nucleotide sequence ID" value="NC_011751.1"/>
</dbReference>
<dbReference type="SMR" id="B7N5T0"/>
<dbReference type="STRING" id="585056.ECUMN_2658"/>
<dbReference type="GeneID" id="75172446"/>
<dbReference type="KEGG" id="eum:ECUMN_2658"/>
<dbReference type="PATRIC" id="fig|585056.7.peg.2840"/>
<dbReference type="HOGENOM" id="CLU_014673_0_2_6"/>
<dbReference type="Proteomes" id="UP000007097">
    <property type="component" value="Chromosome"/>
</dbReference>
<dbReference type="GO" id="GO:0003723">
    <property type="term" value="F:RNA binding"/>
    <property type="evidence" value="ECO:0007669"/>
    <property type="project" value="InterPro"/>
</dbReference>
<dbReference type="GO" id="GO:0160147">
    <property type="term" value="F:tRNA pseudouridine(38-40) synthase activity"/>
    <property type="evidence" value="ECO:0007669"/>
    <property type="project" value="UniProtKB-EC"/>
</dbReference>
<dbReference type="GO" id="GO:0031119">
    <property type="term" value="P:tRNA pseudouridine synthesis"/>
    <property type="evidence" value="ECO:0007669"/>
    <property type="project" value="UniProtKB-UniRule"/>
</dbReference>
<dbReference type="CDD" id="cd02570">
    <property type="entry name" value="PseudoU_synth_EcTruA"/>
    <property type="match status" value="1"/>
</dbReference>
<dbReference type="FunFam" id="3.30.70.580:FF:000001">
    <property type="entry name" value="tRNA pseudouridine synthase A"/>
    <property type="match status" value="1"/>
</dbReference>
<dbReference type="FunFam" id="3.30.70.660:FF:000001">
    <property type="entry name" value="tRNA pseudouridine synthase A"/>
    <property type="match status" value="1"/>
</dbReference>
<dbReference type="Gene3D" id="3.30.70.660">
    <property type="entry name" value="Pseudouridine synthase I, catalytic domain, C-terminal subdomain"/>
    <property type="match status" value="1"/>
</dbReference>
<dbReference type="Gene3D" id="3.30.70.580">
    <property type="entry name" value="Pseudouridine synthase I, catalytic domain, N-terminal subdomain"/>
    <property type="match status" value="1"/>
</dbReference>
<dbReference type="HAMAP" id="MF_00171">
    <property type="entry name" value="TruA"/>
    <property type="match status" value="1"/>
</dbReference>
<dbReference type="InterPro" id="IPR020103">
    <property type="entry name" value="PsdUridine_synth_cat_dom_sf"/>
</dbReference>
<dbReference type="InterPro" id="IPR001406">
    <property type="entry name" value="PsdUridine_synth_TruA"/>
</dbReference>
<dbReference type="InterPro" id="IPR020097">
    <property type="entry name" value="PsdUridine_synth_TruA_a/b_dom"/>
</dbReference>
<dbReference type="InterPro" id="IPR020095">
    <property type="entry name" value="PsdUridine_synth_TruA_C"/>
</dbReference>
<dbReference type="InterPro" id="IPR020094">
    <property type="entry name" value="TruA/RsuA/RluB/E/F_N"/>
</dbReference>
<dbReference type="NCBIfam" id="TIGR00071">
    <property type="entry name" value="hisT_truA"/>
    <property type="match status" value="1"/>
</dbReference>
<dbReference type="PANTHER" id="PTHR11142">
    <property type="entry name" value="PSEUDOURIDYLATE SYNTHASE"/>
    <property type="match status" value="1"/>
</dbReference>
<dbReference type="PANTHER" id="PTHR11142:SF0">
    <property type="entry name" value="TRNA PSEUDOURIDINE SYNTHASE-LIKE 1"/>
    <property type="match status" value="1"/>
</dbReference>
<dbReference type="Pfam" id="PF01416">
    <property type="entry name" value="PseudoU_synth_1"/>
    <property type="match status" value="2"/>
</dbReference>
<dbReference type="PIRSF" id="PIRSF001430">
    <property type="entry name" value="tRNA_psdUrid_synth"/>
    <property type="match status" value="1"/>
</dbReference>
<dbReference type="SUPFAM" id="SSF55120">
    <property type="entry name" value="Pseudouridine synthase"/>
    <property type="match status" value="1"/>
</dbReference>
<gene>
    <name evidence="1" type="primary">truA</name>
    <name type="ordered locus">ECUMN_2658</name>
</gene>
<accession>B7N5T0</accession>
<feature type="chain" id="PRO_1000194552" description="tRNA pseudouridine synthase A">
    <location>
        <begin position="1"/>
        <end position="270"/>
    </location>
</feature>
<feature type="region of interest" description="RNA binding" evidence="1">
    <location>
        <begin position="107"/>
        <end position="111"/>
    </location>
</feature>
<feature type="region of interest" description="Interaction with tRNA" evidence="1">
    <location>
        <begin position="168"/>
        <end position="172"/>
    </location>
</feature>
<feature type="active site" description="Nucleophile" evidence="1">
    <location>
        <position position="60"/>
    </location>
</feature>
<feature type="binding site" evidence="1">
    <location>
        <position position="118"/>
    </location>
    <ligand>
        <name>substrate</name>
    </ligand>
</feature>
<feature type="site" description="Interaction with tRNA; Important for base-flipping" evidence="1">
    <location>
        <position position="58"/>
    </location>
</feature>
<feature type="site" description="Interaction with tRNA" evidence="1">
    <location>
        <position position="78"/>
    </location>
</feature>
<feature type="site" description="Interaction with tRNA" evidence="1">
    <location>
        <position position="110"/>
    </location>
</feature>
<feature type="site" description="Interaction with tRNA" evidence="1">
    <location>
        <position position="126"/>
    </location>
</feature>
<feature type="site" description="Interaction with tRNA" evidence="1">
    <location>
        <position position="139"/>
    </location>
</feature>
<name>TRUA_ECOLU</name>